<proteinExistence type="evidence at protein level"/>
<sequence length="137" mass="15142">MEKTLSIIKPDAVKKGVIGKILDRFESNGLRIAAMKKVQLSKEQAENFYAVHKERPFFKDLVEFMISGPVVVSILEGEGAVLKNRDLMGATNPKEAKAGTIRADFAESIDANAVHGSDSLENAKIEIEFFFKPNEIC</sequence>
<dbReference type="EC" id="2.7.4.6" evidence="1"/>
<dbReference type="EMBL" id="AL111168">
    <property type="protein sequence ID" value="CAL34483.1"/>
    <property type="molecule type" value="Genomic_DNA"/>
</dbReference>
<dbReference type="PIR" id="H81452">
    <property type="entry name" value="H81452"/>
</dbReference>
<dbReference type="RefSeq" id="WP_002858685.1">
    <property type="nucleotide sequence ID" value="NZ_SZUC01000004.1"/>
</dbReference>
<dbReference type="RefSeq" id="YP_002343770.1">
    <property type="nucleotide sequence ID" value="NC_002163.1"/>
</dbReference>
<dbReference type="PDB" id="3PJ9">
    <property type="method" value="X-ray"/>
    <property type="resolution" value="2.10 A"/>
    <property type="chains" value="A/B/C/D=1-137"/>
</dbReference>
<dbReference type="PDBsum" id="3PJ9"/>
<dbReference type="SMR" id="Q9PIG7"/>
<dbReference type="IntAct" id="Q9PIG7">
    <property type="interactions" value="46"/>
</dbReference>
<dbReference type="STRING" id="192222.Cj0332c"/>
<dbReference type="PaxDb" id="192222-Cj0332c"/>
<dbReference type="EnsemblBacteria" id="CAL34483">
    <property type="protein sequence ID" value="CAL34483"/>
    <property type="gene ID" value="Cj0332c"/>
</dbReference>
<dbReference type="GeneID" id="904656"/>
<dbReference type="KEGG" id="cje:Cj0332c"/>
<dbReference type="PATRIC" id="fig|192222.6.peg.324"/>
<dbReference type="eggNOG" id="COG0105">
    <property type="taxonomic scope" value="Bacteria"/>
</dbReference>
<dbReference type="HOGENOM" id="CLU_060216_8_1_7"/>
<dbReference type="OrthoDB" id="9801161at2"/>
<dbReference type="BRENDA" id="2.7.4.6">
    <property type="organism ID" value="13746"/>
</dbReference>
<dbReference type="EvolutionaryTrace" id="Q9PIG7"/>
<dbReference type="Proteomes" id="UP000000799">
    <property type="component" value="Chromosome"/>
</dbReference>
<dbReference type="GO" id="GO:0005737">
    <property type="term" value="C:cytoplasm"/>
    <property type="evidence" value="ECO:0007669"/>
    <property type="project" value="UniProtKB-SubCell"/>
</dbReference>
<dbReference type="GO" id="GO:0005524">
    <property type="term" value="F:ATP binding"/>
    <property type="evidence" value="ECO:0007669"/>
    <property type="project" value="UniProtKB-UniRule"/>
</dbReference>
<dbReference type="GO" id="GO:0046872">
    <property type="term" value="F:metal ion binding"/>
    <property type="evidence" value="ECO:0007669"/>
    <property type="project" value="UniProtKB-KW"/>
</dbReference>
<dbReference type="GO" id="GO:0004550">
    <property type="term" value="F:nucleoside diphosphate kinase activity"/>
    <property type="evidence" value="ECO:0007669"/>
    <property type="project" value="UniProtKB-UniRule"/>
</dbReference>
<dbReference type="GO" id="GO:0006241">
    <property type="term" value="P:CTP biosynthetic process"/>
    <property type="evidence" value="ECO:0007669"/>
    <property type="project" value="UniProtKB-UniRule"/>
</dbReference>
<dbReference type="GO" id="GO:0006183">
    <property type="term" value="P:GTP biosynthetic process"/>
    <property type="evidence" value="ECO:0007669"/>
    <property type="project" value="UniProtKB-UniRule"/>
</dbReference>
<dbReference type="GO" id="GO:0006228">
    <property type="term" value="P:UTP biosynthetic process"/>
    <property type="evidence" value="ECO:0007669"/>
    <property type="project" value="UniProtKB-UniRule"/>
</dbReference>
<dbReference type="CDD" id="cd04413">
    <property type="entry name" value="NDPk_I"/>
    <property type="match status" value="1"/>
</dbReference>
<dbReference type="FunFam" id="3.30.70.141:FF:000001">
    <property type="entry name" value="Nucleoside diphosphate kinase"/>
    <property type="match status" value="1"/>
</dbReference>
<dbReference type="Gene3D" id="3.30.70.141">
    <property type="entry name" value="Nucleoside diphosphate kinase-like domain"/>
    <property type="match status" value="1"/>
</dbReference>
<dbReference type="HAMAP" id="MF_00451">
    <property type="entry name" value="NDP_kinase"/>
    <property type="match status" value="1"/>
</dbReference>
<dbReference type="InterPro" id="IPR034907">
    <property type="entry name" value="NDK-like_dom"/>
</dbReference>
<dbReference type="InterPro" id="IPR036850">
    <property type="entry name" value="NDK-like_dom_sf"/>
</dbReference>
<dbReference type="InterPro" id="IPR001564">
    <property type="entry name" value="Nucleoside_diP_kinase"/>
</dbReference>
<dbReference type="InterPro" id="IPR023005">
    <property type="entry name" value="Nucleoside_diP_kinase_AS"/>
</dbReference>
<dbReference type="NCBIfam" id="NF001908">
    <property type="entry name" value="PRK00668.1"/>
    <property type="match status" value="1"/>
</dbReference>
<dbReference type="PANTHER" id="PTHR46161">
    <property type="entry name" value="NUCLEOSIDE DIPHOSPHATE KINASE"/>
    <property type="match status" value="1"/>
</dbReference>
<dbReference type="PANTHER" id="PTHR46161:SF3">
    <property type="entry name" value="NUCLEOSIDE DIPHOSPHATE KINASE DDB_G0292928-RELATED"/>
    <property type="match status" value="1"/>
</dbReference>
<dbReference type="Pfam" id="PF00334">
    <property type="entry name" value="NDK"/>
    <property type="match status" value="1"/>
</dbReference>
<dbReference type="PRINTS" id="PR01243">
    <property type="entry name" value="NUCDPKINASE"/>
</dbReference>
<dbReference type="SMART" id="SM00562">
    <property type="entry name" value="NDK"/>
    <property type="match status" value="1"/>
</dbReference>
<dbReference type="SUPFAM" id="SSF54919">
    <property type="entry name" value="Nucleoside diphosphate kinase, NDK"/>
    <property type="match status" value="1"/>
</dbReference>
<dbReference type="PROSITE" id="PS00469">
    <property type="entry name" value="NDPK"/>
    <property type="match status" value="1"/>
</dbReference>
<dbReference type="PROSITE" id="PS51374">
    <property type="entry name" value="NDPK_LIKE"/>
    <property type="match status" value="1"/>
</dbReference>
<reference key="1">
    <citation type="journal article" date="2000" name="Nature">
        <title>The genome sequence of the food-borne pathogen Campylobacter jejuni reveals hypervariable sequences.</title>
        <authorList>
            <person name="Parkhill J."/>
            <person name="Wren B.W."/>
            <person name="Mungall K.L."/>
            <person name="Ketley J.M."/>
            <person name="Churcher C.M."/>
            <person name="Basham D."/>
            <person name="Chillingworth T."/>
            <person name="Davies R.M."/>
            <person name="Feltwell T."/>
            <person name="Holroyd S."/>
            <person name="Jagels K."/>
            <person name="Karlyshev A.V."/>
            <person name="Moule S."/>
            <person name="Pallen M.J."/>
            <person name="Penn C.W."/>
            <person name="Quail M.A."/>
            <person name="Rajandream M.A."/>
            <person name="Rutherford K.M."/>
            <person name="van Vliet A.H.M."/>
            <person name="Whitehead S."/>
            <person name="Barrell B.G."/>
        </authorList>
    </citation>
    <scope>NUCLEOTIDE SEQUENCE [LARGE SCALE GENOMIC DNA]</scope>
    <source>
        <strain>ATCC 700819 / NCTC 11168</strain>
    </source>
</reference>
<comment type="function">
    <text evidence="1">Major role in the synthesis of nucleoside triphosphates other than ATP. The ATP gamma phosphate is transferred to the NDP beta phosphate via a ping-pong mechanism, using a phosphorylated active-site intermediate.</text>
</comment>
<comment type="catalytic activity">
    <reaction evidence="1">
        <text>a 2'-deoxyribonucleoside 5'-diphosphate + ATP = a 2'-deoxyribonucleoside 5'-triphosphate + ADP</text>
        <dbReference type="Rhea" id="RHEA:44640"/>
        <dbReference type="ChEBI" id="CHEBI:30616"/>
        <dbReference type="ChEBI" id="CHEBI:61560"/>
        <dbReference type="ChEBI" id="CHEBI:73316"/>
        <dbReference type="ChEBI" id="CHEBI:456216"/>
        <dbReference type="EC" id="2.7.4.6"/>
    </reaction>
</comment>
<comment type="catalytic activity">
    <reaction evidence="1">
        <text>a ribonucleoside 5'-diphosphate + ATP = a ribonucleoside 5'-triphosphate + ADP</text>
        <dbReference type="Rhea" id="RHEA:18113"/>
        <dbReference type="ChEBI" id="CHEBI:30616"/>
        <dbReference type="ChEBI" id="CHEBI:57930"/>
        <dbReference type="ChEBI" id="CHEBI:61557"/>
        <dbReference type="ChEBI" id="CHEBI:456216"/>
        <dbReference type="EC" id="2.7.4.6"/>
    </reaction>
</comment>
<comment type="cofactor">
    <cofactor evidence="1">
        <name>Mg(2+)</name>
        <dbReference type="ChEBI" id="CHEBI:18420"/>
    </cofactor>
</comment>
<comment type="subunit">
    <text evidence="1">Homotetramer.</text>
</comment>
<comment type="subcellular location">
    <subcellularLocation>
        <location evidence="1">Cytoplasm</location>
    </subcellularLocation>
</comment>
<comment type="similarity">
    <text evidence="1">Belongs to the NDK family.</text>
</comment>
<evidence type="ECO:0000255" key="1">
    <source>
        <dbReference type="HAMAP-Rule" id="MF_00451"/>
    </source>
</evidence>
<evidence type="ECO:0007829" key="2">
    <source>
        <dbReference type="PDB" id="3PJ9"/>
    </source>
</evidence>
<keyword id="KW-0002">3D-structure</keyword>
<keyword id="KW-0067">ATP-binding</keyword>
<keyword id="KW-0963">Cytoplasm</keyword>
<keyword id="KW-0418">Kinase</keyword>
<keyword id="KW-0460">Magnesium</keyword>
<keyword id="KW-0479">Metal-binding</keyword>
<keyword id="KW-0546">Nucleotide metabolism</keyword>
<keyword id="KW-0547">Nucleotide-binding</keyword>
<keyword id="KW-0597">Phosphoprotein</keyword>
<keyword id="KW-1185">Reference proteome</keyword>
<keyword id="KW-0808">Transferase</keyword>
<name>NDK_CAMJE</name>
<feature type="chain" id="PRO_0000136960" description="Nucleoside diphosphate kinase">
    <location>
        <begin position="1"/>
        <end position="137"/>
    </location>
</feature>
<feature type="active site" description="Pros-phosphohistidine intermediate" evidence="1">
    <location>
        <position position="115"/>
    </location>
</feature>
<feature type="binding site" evidence="1">
    <location>
        <position position="9"/>
    </location>
    <ligand>
        <name>ATP</name>
        <dbReference type="ChEBI" id="CHEBI:30616"/>
    </ligand>
</feature>
<feature type="binding site" evidence="1">
    <location>
        <position position="57"/>
    </location>
    <ligand>
        <name>ATP</name>
        <dbReference type="ChEBI" id="CHEBI:30616"/>
    </ligand>
</feature>
<feature type="binding site" evidence="1">
    <location>
        <position position="85"/>
    </location>
    <ligand>
        <name>ATP</name>
        <dbReference type="ChEBI" id="CHEBI:30616"/>
    </ligand>
</feature>
<feature type="binding site" evidence="1">
    <location>
        <position position="91"/>
    </location>
    <ligand>
        <name>ATP</name>
        <dbReference type="ChEBI" id="CHEBI:30616"/>
    </ligand>
</feature>
<feature type="binding site" evidence="1">
    <location>
        <position position="102"/>
    </location>
    <ligand>
        <name>ATP</name>
        <dbReference type="ChEBI" id="CHEBI:30616"/>
    </ligand>
</feature>
<feature type="binding site" evidence="1">
    <location>
        <position position="112"/>
    </location>
    <ligand>
        <name>ATP</name>
        <dbReference type="ChEBI" id="CHEBI:30616"/>
    </ligand>
</feature>
<feature type="strand" evidence="2">
    <location>
        <begin position="2"/>
        <end position="8"/>
    </location>
</feature>
<feature type="helix" evidence="2">
    <location>
        <begin position="10"/>
        <end position="15"/>
    </location>
</feature>
<feature type="helix" evidence="2">
    <location>
        <begin position="18"/>
        <end position="26"/>
    </location>
</feature>
<feature type="turn" evidence="2">
    <location>
        <begin position="27"/>
        <end position="29"/>
    </location>
</feature>
<feature type="strand" evidence="2">
    <location>
        <begin position="31"/>
        <end position="38"/>
    </location>
</feature>
<feature type="helix" evidence="2">
    <location>
        <begin position="42"/>
        <end position="48"/>
    </location>
</feature>
<feature type="helix" evidence="2">
    <location>
        <begin position="50"/>
        <end position="52"/>
    </location>
</feature>
<feature type="helix" evidence="2">
    <location>
        <begin position="58"/>
        <end position="65"/>
    </location>
</feature>
<feature type="strand" evidence="2">
    <location>
        <begin position="70"/>
        <end position="77"/>
    </location>
</feature>
<feature type="helix" evidence="2">
    <location>
        <begin position="80"/>
        <end position="88"/>
    </location>
</feature>
<feature type="helix" evidence="2">
    <location>
        <begin position="93"/>
        <end position="95"/>
    </location>
</feature>
<feature type="helix" evidence="2">
    <location>
        <begin position="101"/>
        <end position="105"/>
    </location>
</feature>
<feature type="strand" evidence="2">
    <location>
        <begin position="108"/>
        <end position="111"/>
    </location>
</feature>
<feature type="strand" evidence="2">
    <location>
        <begin position="113"/>
        <end position="116"/>
    </location>
</feature>
<feature type="helix" evidence="2">
    <location>
        <begin position="120"/>
        <end position="130"/>
    </location>
</feature>
<gene>
    <name evidence="1" type="primary">ndk</name>
    <name type="ordered locus">Cj0332c</name>
</gene>
<organism>
    <name type="scientific">Campylobacter jejuni subsp. jejuni serotype O:2 (strain ATCC 700819 / NCTC 11168)</name>
    <dbReference type="NCBI Taxonomy" id="192222"/>
    <lineage>
        <taxon>Bacteria</taxon>
        <taxon>Pseudomonadati</taxon>
        <taxon>Campylobacterota</taxon>
        <taxon>Epsilonproteobacteria</taxon>
        <taxon>Campylobacterales</taxon>
        <taxon>Campylobacteraceae</taxon>
        <taxon>Campylobacter</taxon>
    </lineage>
</organism>
<accession>Q9PIG7</accession>
<accession>Q0PBH7</accession>
<protein>
    <recommendedName>
        <fullName evidence="1">Nucleoside diphosphate kinase</fullName>
        <shortName evidence="1">NDK</shortName>
        <shortName evidence="1">NDP kinase</shortName>
        <ecNumber evidence="1">2.7.4.6</ecNumber>
    </recommendedName>
    <alternativeName>
        <fullName evidence="1">Nucleoside-2-P kinase</fullName>
    </alternativeName>
</protein>